<comment type="function">
    <text evidence="1">One of the primary rRNA binding proteins, it binds directly to 16S rRNA where it helps nucleate assembly of the platform of the 30S subunit by binding and bridging several RNA helices of the 16S rRNA.</text>
</comment>
<comment type="function">
    <text evidence="1">Forms an intersubunit bridge (bridge B4) with the 23S rRNA of the 50S subunit in the ribosome.</text>
</comment>
<comment type="subunit">
    <text evidence="1">Part of the 30S ribosomal subunit. Forms a bridge to the 50S subunit in the 70S ribosome, contacting the 23S rRNA.</text>
</comment>
<comment type="similarity">
    <text evidence="1">Belongs to the universal ribosomal protein uS15 family.</text>
</comment>
<organism>
    <name type="scientific">Buchnera aphidicola subsp. Acyrthosiphon pisum (strain Tuc7)</name>
    <dbReference type="NCBI Taxonomy" id="561501"/>
    <lineage>
        <taxon>Bacteria</taxon>
        <taxon>Pseudomonadati</taxon>
        <taxon>Pseudomonadota</taxon>
        <taxon>Gammaproteobacteria</taxon>
        <taxon>Enterobacterales</taxon>
        <taxon>Erwiniaceae</taxon>
        <taxon>Buchnera</taxon>
    </lineage>
</organism>
<gene>
    <name evidence="1" type="primary">rpsO</name>
    <name type="ordered locus">BUAPTUC7_368</name>
</gene>
<proteinExistence type="inferred from homology"/>
<feature type="chain" id="PRO_1000166407" description="Small ribosomal subunit protein uS15">
    <location>
        <begin position="1"/>
        <end position="89"/>
    </location>
</feature>
<sequence>MSLSAIDTKKIILKYGKSEQNSGITEVQVVLLTNQINYLQIHFSQHKKDHCSRRGLLNMVSKRRKLLDYLKKKNISRYSALIEDLHLRR</sequence>
<keyword id="KW-0687">Ribonucleoprotein</keyword>
<keyword id="KW-0689">Ribosomal protein</keyword>
<keyword id="KW-0694">RNA-binding</keyword>
<keyword id="KW-0699">rRNA-binding</keyword>
<dbReference type="EMBL" id="CP001158">
    <property type="protein sequence ID" value="ACL30176.1"/>
    <property type="molecule type" value="Genomic_DNA"/>
</dbReference>
<dbReference type="RefSeq" id="WP_009874332.1">
    <property type="nucleotide sequence ID" value="NC_011834.1"/>
</dbReference>
<dbReference type="SMR" id="B8D7R1"/>
<dbReference type="KEGG" id="bau:BUAPTUC7_368"/>
<dbReference type="HOGENOM" id="CLU_148518_0_0_6"/>
<dbReference type="GO" id="GO:0022627">
    <property type="term" value="C:cytosolic small ribosomal subunit"/>
    <property type="evidence" value="ECO:0007669"/>
    <property type="project" value="TreeGrafter"/>
</dbReference>
<dbReference type="GO" id="GO:0019843">
    <property type="term" value="F:rRNA binding"/>
    <property type="evidence" value="ECO:0007669"/>
    <property type="project" value="UniProtKB-UniRule"/>
</dbReference>
<dbReference type="GO" id="GO:0003735">
    <property type="term" value="F:structural constituent of ribosome"/>
    <property type="evidence" value="ECO:0007669"/>
    <property type="project" value="InterPro"/>
</dbReference>
<dbReference type="GO" id="GO:0006412">
    <property type="term" value="P:translation"/>
    <property type="evidence" value="ECO:0007669"/>
    <property type="project" value="UniProtKB-UniRule"/>
</dbReference>
<dbReference type="CDD" id="cd00353">
    <property type="entry name" value="Ribosomal_S15p_S13e"/>
    <property type="match status" value="1"/>
</dbReference>
<dbReference type="Gene3D" id="6.10.250.3130">
    <property type="match status" value="1"/>
</dbReference>
<dbReference type="Gene3D" id="1.10.287.10">
    <property type="entry name" value="S15/NS1, RNA-binding"/>
    <property type="match status" value="1"/>
</dbReference>
<dbReference type="HAMAP" id="MF_01343_B">
    <property type="entry name" value="Ribosomal_uS15_B"/>
    <property type="match status" value="1"/>
</dbReference>
<dbReference type="InterPro" id="IPR000589">
    <property type="entry name" value="Ribosomal_uS15"/>
</dbReference>
<dbReference type="InterPro" id="IPR005290">
    <property type="entry name" value="Ribosomal_uS15_bac-type"/>
</dbReference>
<dbReference type="InterPro" id="IPR009068">
    <property type="entry name" value="uS15_NS1_RNA-bd_sf"/>
</dbReference>
<dbReference type="NCBIfam" id="TIGR00952">
    <property type="entry name" value="S15_bact"/>
    <property type="match status" value="1"/>
</dbReference>
<dbReference type="PANTHER" id="PTHR23321">
    <property type="entry name" value="RIBOSOMAL PROTEIN S15, BACTERIAL AND ORGANELLAR"/>
    <property type="match status" value="1"/>
</dbReference>
<dbReference type="PANTHER" id="PTHR23321:SF26">
    <property type="entry name" value="SMALL RIBOSOMAL SUBUNIT PROTEIN US15M"/>
    <property type="match status" value="1"/>
</dbReference>
<dbReference type="Pfam" id="PF00312">
    <property type="entry name" value="Ribosomal_S15"/>
    <property type="match status" value="1"/>
</dbReference>
<dbReference type="SMART" id="SM01387">
    <property type="entry name" value="Ribosomal_S15"/>
    <property type="match status" value="1"/>
</dbReference>
<dbReference type="SUPFAM" id="SSF47060">
    <property type="entry name" value="S15/NS1 RNA-binding domain"/>
    <property type="match status" value="1"/>
</dbReference>
<dbReference type="PROSITE" id="PS00362">
    <property type="entry name" value="RIBOSOMAL_S15"/>
    <property type="match status" value="1"/>
</dbReference>
<evidence type="ECO:0000255" key="1">
    <source>
        <dbReference type="HAMAP-Rule" id="MF_01343"/>
    </source>
</evidence>
<evidence type="ECO:0000305" key="2"/>
<protein>
    <recommendedName>
        <fullName evidence="1">Small ribosomal subunit protein uS15</fullName>
    </recommendedName>
    <alternativeName>
        <fullName evidence="2">30S ribosomal protein S15</fullName>
    </alternativeName>
</protein>
<name>RS15_BUCAT</name>
<reference key="1">
    <citation type="journal article" date="2009" name="Science">
        <title>The dynamics and time scale of ongoing genomic erosion in symbiotic bacteria.</title>
        <authorList>
            <person name="Moran N.A."/>
            <person name="McLaughlin H.J."/>
            <person name="Sorek R."/>
        </authorList>
    </citation>
    <scope>NUCLEOTIDE SEQUENCE [LARGE SCALE GENOMIC DNA]</scope>
    <source>
        <strain>Tuc7</strain>
    </source>
</reference>
<accession>B8D7R1</accession>